<feature type="chain" id="PRO_0000457881" description="Non-toxic nonhemagglutinin">
    <location>
        <begin position="1"/>
        <end position="1167"/>
    </location>
</feature>
<feature type="region of interest" description="Light chain nLC" evidence="1">
    <location>
        <begin position="1"/>
        <end position="381"/>
    </location>
</feature>
<feature type="region of interest" description="N-heavy chain nHN" evidence="1">
    <location>
        <begin position="382"/>
        <end position="804"/>
    </location>
</feature>
<feature type="region of interest" description="C-heavy chain nHC" evidence="1">
    <location>
        <begin position="805"/>
        <end position="1167"/>
    </location>
</feature>
<organism>
    <name type="scientific">Paraclostridium bifermentans</name>
    <name type="common">Clostridium bifermentans</name>
    <dbReference type="NCBI Taxonomy" id="1490"/>
    <lineage>
        <taxon>Bacteria</taxon>
        <taxon>Bacillati</taxon>
        <taxon>Bacillota</taxon>
        <taxon>Clostridia</taxon>
        <taxon>Peptostreptococcales</taxon>
        <taxon>Peptostreptococcaceae</taxon>
        <taxon>Paraclostridium</taxon>
    </lineage>
</organism>
<name>NTNH_PARBF</name>
<accession>A0A5P3XKL4</accession>
<geneLocation type="plasmid">
    <name>pPbmMP</name>
</geneLocation>
<protein>
    <recommendedName>
        <fullName evidence="3">Non-toxic nonhemagglutinin</fullName>
        <shortName evidence="3">NTNH</shortName>
    </recommendedName>
</protein>
<comment type="function">
    <text evidence="2">Expression of the ptox operon (ntnh-orfX1-orfX2-orfX3-pmp1) in B.thuringiensis kills Anopheles but not Aedes mosquito 3rd instar larvae. The ntnh-pmp1 construct is about half as toxic.</text>
</comment>
<comment type="induction">
    <text evidence="2">Part of a high-molecular weight complex with other proteins from the ptox and cry loci. Encoded in the ptox locus, possibly in an ntnh-orfX1-orfX2-orfX3-pmp1 operon.</text>
</comment>
<comment type="domain">
    <text evidence="1">Has 3 domains that are structurally very similar to those in PMP1; light chain (nLC, equivalent to the light chain), N-heavy chain (nHN) and C-heavy chain (nHC).</text>
</comment>
<comment type="miscellaneous">
    <text evidence="2">P.bifermentans strain Cbm (subsp. malaysia) is toxic to Anopheles mosquito 3rd instar larvae and less toxic to Aedes aegypti larvae. The presence of 4 plasmids, including this one, is required to kill mosquito larvae.</text>
</comment>
<comment type="similarity">
    <text evidence="4">Belongs to the botulism non-toxic nonhemagglutinin family.</text>
</comment>
<sequence length="1167" mass="136455">MDIIDNVDITLPENGEDIVIVGGRRYDYNGDLAKFKAFKVAKHIWVVPGRYYGEKLDIQDGEKINGGIYDKDFLSQNQEKQEFMDGVILLLKRINNTLEGKRLLSLITSAVPFPNEDDGIYKQNNFILSDKTFKAYTSNIIIFGPGANLVENKVIAFNSGDAENGLGTISEICFQPLLTYKFGDYFQDPALDLLKCLIKSLYYLYGIKVPEDFTLPYRLTNNPDKTEYSQVNMEDLLISGGDDLNAAGQRPYWLWNNYFIDAKDKFDKYKEIYENQMKLDPNLEINLSNHLEQKFNINISELWSLNISNFARTFNLKSPRSFYKALKYYYRKKYYKIHYNEIFGTNYNIYGFIDGQVNASLKETDLNIINKPQQIINLIDNNNILLIKSYIYDDELNKIDYNFYNNYEIPYNYGNSFKIPNITGILLPSVNYELIDKIPKIAEIKPYIKDSTPLPDSEKTPIPKELNVGIPLPIHYLDSQIYKGDEDKDFILSPDFLKVVSTKDKSLVYSFLPNIVSYFDGYDKTKISTDKKYYLWIREVLNNYSIDITRTENIIGIFGVDEIVPWMGRALNILNTENTFETELRKNGLKALLSKDLNVIFPKTKVDPIPTDNPPLTIEKIDEKLSDIYIKNKFFLIKNYYITIQQWWICCYSQFLNLSYMCREAIINQQNLIEKIILNQLSYLARETSINIETLYILSVTTEKTIEDLREISQKSMNNICNFFERASVSIFHTDIYNKFIDHMKYIVDDANTKIINYINSNSNITQEEKNYLINKYMLTEEDFNFFNFDKLINLFNSKIQLTIKNEKPEYNLLLSINQNESNENITDISGNNVKISYSNNINILDGRNEQAIYLDNDSQYVDFKSKNFENGVTNNFTISFWMRTLEKVDTNSTLLTSKLNENSAGWQLDLRRNGLVWSMKDHNKNEINIYLNDFLDISWHYIVVSVNRLTNILTVYIDGELSVNRNIEEIYNLYSDVGTIKLQASGSKVRIESFSILNRDIQRDEVSNRYINYIDNVNLRNIYGERLEYNKEYEVSNYVYPRNLLYKVNDIYLAIERGSNSSNRFKLILININEDKKFVQQKDIVIIKDVTQNKYLGISEDSNKIKLVDRNNALELILDNHLLNPNYTTFSTKQEEYLRLSNIDGIYNWVIKDVSRLNDIYSWTLI</sequence>
<dbReference type="EMBL" id="CP032455">
    <property type="protein sequence ID" value="QEZ70856.1"/>
    <property type="molecule type" value="Genomic_DNA"/>
</dbReference>
<dbReference type="RefSeq" id="WP_150887780.1">
    <property type="nucleotide sequence ID" value="NZ_CM017269.1"/>
</dbReference>
<dbReference type="SMR" id="A0A5P3XKL4"/>
<dbReference type="Proteomes" id="UP000326961">
    <property type="component" value="Plasmid pPbmMP"/>
</dbReference>
<dbReference type="GO" id="GO:0005576">
    <property type="term" value="C:extracellular region"/>
    <property type="evidence" value="ECO:0007669"/>
    <property type="project" value="InterPro"/>
</dbReference>
<dbReference type="GO" id="GO:0004222">
    <property type="term" value="F:metalloendopeptidase activity"/>
    <property type="evidence" value="ECO:0007669"/>
    <property type="project" value="InterPro"/>
</dbReference>
<dbReference type="GO" id="GO:0090729">
    <property type="term" value="F:toxin activity"/>
    <property type="evidence" value="ECO:0000315"/>
    <property type="project" value="UniProtKB"/>
</dbReference>
<dbReference type="GO" id="GO:0008270">
    <property type="term" value="F:zinc ion binding"/>
    <property type="evidence" value="ECO:0007669"/>
    <property type="project" value="InterPro"/>
</dbReference>
<dbReference type="GO" id="GO:0006508">
    <property type="term" value="P:proteolysis"/>
    <property type="evidence" value="ECO:0007669"/>
    <property type="project" value="InterPro"/>
</dbReference>
<dbReference type="Gene3D" id="2.60.120.200">
    <property type="match status" value="1"/>
</dbReference>
<dbReference type="Gene3D" id="2.80.10.50">
    <property type="match status" value="1"/>
</dbReference>
<dbReference type="Gene3D" id="1.20.1120.10">
    <property type="entry name" value="Clostridium botulinum neurotoxin b, 'coiled-coil' domain"/>
    <property type="match status" value="1"/>
</dbReference>
<dbReference type="Gene3D" id="3.90.1240.10">
    <property type="entry name" value="Metalloproteases ('zincins'), catalytic domain like"/>
    <property type="match status" value="1"/>
</dbReference>
<dbReference type="InterPro" id="IPR000395">
    <property type="entry name" value="Bot/tetX_LC"/>
</dbReference>
<dbReference type="InterPro" id="IPR036248">
    <property type="entry name" value="Clostridium_toxin_transloc"/>
</dbReference>
<dbReference type="InterPro" id="IPR013320">
    <property type="entry name" value="ConA-like_dom_sf"/>
</dbReference>
<dbReference type="InterPro" id="IPR013677">
    <property type="entry name" value="Nontoxic_nonhemagglutn_C"/>
</dbReference>
<dbReference type="InterPro" id="IPR012928">
    <property type="entry name" value="Toxin_rcpt-bd_N"/>
</dbReference>
<dbReference type="NCBIfam" id="NF033911">
    <property type="entry name" value="botu_NTNH"/>
    <property type="match status" value="1"/>
</dbReference>
<dbReference type="Pfam" id="PF08470">
    <property type="entry name" value="NTNH_C"/>
    <property type="match status" value="1"/>
</dbReference>
<dbReference type="Pfam" id="PF01742">
    <property type="entry name" value="Peptidase_M27"/>
    <property type="match status" value="1"/>
</dbReference>
<dbReference type="Pfam" id="PF22133">
    <property type="entry name" value="Toxin_BN_H"/>
    <property type="match status" value="1"/>
</dbReference>
<dbReference type="Pfam" id="PF07953">
    <property type="entry name" value="Toxin_R_bind_N"/>
    <property type="match status" value="1"/>
</dbReference>
<dbReference type="PRINTS" id="PR00760">
    <property type="entry name" value="BONTOXILYSIN"/>
</dbReference>
<dbReference type="SUPFAM" id="SSF58091">
    <property type="entry name" value="Clostridium neurotoxins, 'coiled-coil' domain"/>
    <property type="match status" value="1"/>
</dbReference>
<dbReference type="SUPFAM" id="SSF49899">
    <property type="entry name" value="Concanavalin A-like lectins/glucanases"/>
    <property type="match status" value="1"/>
</dbReference>
<dbReference type="SUPFAM" id="SSF55486">
    <property type="entry name" value="Metalloproteases ('zincins'), catalytic domain"/>
    <property type="match status" value="1"/>
</dbReference>
<reference evidence="5" key="1">
    <citation type="journal article" date="2019" name="Nat. Commun.">
        <title>A neurotoxin that specifically targets Anopheles mosquitoes.</title>
        <authorList>
            <person name="Contreras E."/>
            <person name="Masuyer G."/>
            <person name="Qureshi N."/>
            <person name="Chawla S."/>
            <person name="Dhillon H.S."/>
            <person name="Lee H.L."/>
            <person name="Chen J."/>
            <person name="Stenmark P."/>
            <person name="Gill S.S."/>
        </authorList>
    </citation>
    <scope>NUCLEOTIDE SEQUENCE [LARGE SCALE GENOMIC DNA]</scope>
    <scope>FUNCTION</scope>
    <scope>INDUCTION</scope>
    <scope>IDENTIFICATION BY MASS SPECTROMETRY</scope>
    <source>
        <strain>Cbm</strain>
        <plasmid>pPbmMP</plasmid>
    </source>
</reference>
<gene>
    <name evidence="3" type="primary">ntnh</name>
    <name evidence="5" type="ORF">D4A35_18140</name>
</gene>
<keyword id="KW-0614">Plasmid</keyword>
<keyword id="KW-0843">Virulence</keyword>
<evidence type="ECO:0000250" key="1">
    <source>
        <dbReference type="UniProtKB" id="Q45914"/>
    </source>
</evidence>
<evidence type="ECO:0000269" key="2">
    <source>
    </source>
</evidence>
<evidence type="ECO:0000303" key="3">
    <source>
    </source>
</evidence>
<evidence type="ECO:0000305" key="4"/>
<evidence type="ECO:0000312" key="5">
    <source>
        <dbReference type="EMBL" id="QEZ70856.1"/>
    </source>
</evidence>
<proteinExistence type="evidence at protein level"/>